<proteinExistence type="evidence at protein level"/>
<comment type="function">
    <text evidence="4">Required for maintaining the appropriate mycolic acid composition and permeability of the envelope on its exposure to acidic pH.</text>
</comment>
<comment type="cofactor">
    <cofactor evidence="1">
        <name>FAD</name>
        <dbReference type="ChEBI" id="CHEBI:57692"/>
    </cofactor>
    <text evidence="1">Binds 1 FAD per subunit.</text>
</comment>
<comment type="induction">
    <text evidence="3">Expression is controlled by VirS. Induced at acidic pH and in macrophages.</text>
</comment>
<comment type="disruption phenotype">
    <text evidence="4 5">Inactivation of the mymA operon causes altered cell wall structure, reduced contents and altered composition of mycolic acids along with the accumulation of saturated C24 and C26 fatty acids, and enhanced susceptibility to antibiotics, detergents and acidic pH. Also impairs ability to survive in macrophages.</text>
</comment>
<comment type="similarity">
    <text evidence="6">Belongs to the FAD-binding monooxygenase family.</text>
</comment>
<evidence type="ECO:0000250" key="1"/>
<evidence type="ECO:0000255" key="2"/>
<evidence type="ECO:0000269" key="3">
    <source>
    </source>
</evidence>
<evidence type="ECO:0000269" key="4">
    <source>
    </source>
</evidence>
<evidence type="ECO:0000269" key="5">
    <source>
    </source>
</evidence>
<evidence type="ECO:0000305" key="6"/>
<reference key="1">
    <citation type="journal article" date="1998" name="Nature">
        <title>Deciphering the biology of Mycobacterium tuberculosis from the complete genome sequence.</title>
        <authorList>
            <person name="Cole S.T."/>
            <person name="Brosch R."/>
            <person name="Parkhill J."/>
            <person name="Garnier T."/>
            <person name="Churcher C.M."/>
            <person name="Harris D.E."/>
            <person name="Gordon S.V."/>
            <person name="Eiglmeier K."/>
            <person name="Gas S."/>
            <person name="Barry C.E. III"/>
            <person name="Tekaia F."/>
            <person name="Badcock K."/>
            <person name="Basham D."/>
            <person name="Brown D."/>
            <person name="Chillingworth T."/>
            <person name="Connor R."/>
            <person name="Davies R.M."/>
            <person name="Devlin K."/>
            <person name="Feltwell T."/>
            <person name="Gentles S."/>
            <person name="Hamlin N."/>
            <person name="Holroyd S."/>
            <person name="Hornsby T."/>
            <person name="Jagels K."/>
            <person name="Krogh A."/>
            <person name="McLean J."/>
            <person name="Moule S."/>
            <person name="Murphy L.D."/>
            <person name="Oliver S."/>
            <person name="Osborne J."/>
            <person name="Quail M.A."/>
            <person name="Rajandream M.A."/>
            <person name="Rogers J."/>
            <person name="Rutter S."/>
            <person name="Seeger K."/>
            <person name="Skelton S."/>
            <person name="Squares S."/>
            <person name="Squares R."/>
            <person name="Sulston J.E."/>
            <person name="Taylor K."/>
            <person name="Whitehead S."/>
            <person name="Barrell B.G."/>
        </authorList>
    </citation>
    <scope>NUCLEOTIDE SEQUENCE [LARGE SCALE GENOMIC DNA]</scope>
    <source>
        <strain>ATCC 25618 / H37Rv</strain>
    </source>
</reference>
<reference key="2">
    <citation type="journal article" date="2003" name="FEMS Microbiol. Lett.">
        <title>mymA operon of Mycobacterium tuberculosis: its regulation and importance in the cell envelope.</title>
        <authorList>
            <person name="Singh A."/>
            <person name="Jain S."/>
            <person name="Gupta S."/>
            <person name="Das T."/>
            <person name="Tyagi A.K."/>
        </authorList>
    </citation>
    <scope>INDUCTION</scope>
    <scope>GENE NAME</scope>
</reference>
<reference key="3">
    <citation type="journal article" date="2005" name="J. Bacteriol.">
        <title>Requirement of the mymA operon for appropriate cell wall ultrastructure and persistence of Mycobacterium tuberculosis in the spleens of guinea pigs.</title>
        <authorList>
            <person name="Singh A."/>
            <person name="Gupta R."/>
            <person name="Vishwakarma R.A."/>
            <person name="Narayanan P.R."/>
            <person name="Paramasivan C.N."/>
            <person name="Ramanathan V.D."/>
            <person name="Tyagi A.K."/>
        </authorList>
    </citation>
    <scope>FUNCTION</scope>
    <scope>DISRUPTION PHENOTYPE</scope>
    <source>
        <strain>Erdman</strain>
    </source>
</reference>
<reference key="4">
    <citation type="journal article" date="2007" name="Tuberculosis">
        <title>The acid-induced operon Rv3083-Rv3089 is required for growth of Mycobacterium tuberculosis in macrophages.</title>
        <authorList>
            <person name="Cheruvu M."/>
            <person name="Plikaytis B.B."/>
            <person name="Shinnick T.M."/>
        </authorList>
    </citation>
    <scope>DISRUPTION PHENOTYPE</scope>
    <source>
        <strain>ATCC 25618 / H37Rv</strain>
    </source>
</reference>
<reference key="5">
    <citation type="journal article" date="2011" name="Mol. Cell. Proteomics">
        <title>Proteogenomic analysis of Mycobacterium tuberculosis by high resolution mass spectrometry.</title>
        <authorList>
            <person name="Kelkar D.S."/>
            <person name="Kumar D."/>
            <person name="Kumar P."/>
            <person name="Balakrishnan L."/>
            <person name="Muthusamy B."/>
            <person name="Yadav A.K."/>
            <person name="Shrivastava P."/>
            <person name="Marimuthu A."/>
            <person name="Anand S."/>
            <person name="Sundaram H."/>
            <person name="Kingsbury R."/>
            <person name="Harsha H.C."/>
            <person name="Nair B."/>
            <person name="Prasad T.S."/>
            <person name="Chauhan D.S."/>
            <person name="Katoch K."/>
            <person name="Katoch V.M."/>
            <person name="Kumar P."/>
            <person name="Chaerkady R."/>
            <person name="Ramachandran S."/>
            <person name="Dash D."/>
            <person name="Pandey A."/>
        </authorList>
    </citation>
    <scope>IDENTIFICATION BY MASS SPECTROMETRY [LARGE SCALE ANALYSIS]</scope>
    <source>
        <strain>ATCC 25618 / H37Rv</strain>
    </source>
</reference>
<keyword id="KW-0274">FAD</keyword>
<keyword id="KW-0285">Flavoprotein</keyword>
<keyword id="KW-0503">Monooxygenase</keyword>
<keyword id="KW-0560">Oxidoreductase</keyword>
<keyword id="KW-1185">Reference proteome</keyword>
<accession>P9WNF7</accession>
<accession>F2GNY5</accession>
<accession>L0TBT0</accession>
<accession>O53300</accession>
<accession>Q7D658</accession>
<feature type="chain" id="PRO_0000420876" description="Putative FAD-containing monooxygenase MymA">
    <location>
        <begin position="1"/>
        <end position="495"/>
    </location>
</feature>
<feature type="binding site" evidence="1">
    <location>
        <position position="15"/>
    </location>
    <ligand>
        <name>FAD</name>
        <dbReference type="ChEBI" id="CHEBI:57692"/>
    </ligand>
</feature>
<feature type="binding site" evidence="1">
    <location>
        <position position="36"/>
    </location>
    <ligand>
        <name>FAD</name>
        <dbReference type="ChEBI" id="CHEBI:57692"/>
    </ligand>
</feature>
<feature type="binding site" evidence="1">
    <location>
        <position position="45"/>
    </location>
    <ligand>
        <name>FAD</name>
        <dbReference type="ChEBI" id="CHEBI:57692"/>
    </ligand>
</feature>
<feature type="binding site" evidence="1">
    <location>
        <begin position="56"/>
        <end position="57"/>
    </location>
    <ligand>
        <name>FAD</name>
        <dbReference type="ChEBI" id="CHEBI:57692"/>
    </ligand>
</feature>
<feature type="binding site" evidence="1">
    <location>
        <position position="104"/>
    </location>
    <ligand>
        <name>FAD</name>
        <dbReference type="ChEBI" id="CHEBI:57692"/>
    </ligand>
</feature>
<feature type="site" description="Transition state stabilizer" evidence="2">
    <location>
        <position position="296"/>
    </location>
</feature>
<organism>
    <name type="scientific">Mycobacterium tuberculosis (strain ATCC 25618 / H37Rv)</name>
    <dbReference type="NCBI Taxonomy" id="83332"/>
    <lineage>
        <taxon>Bacteria</taxon>
        <taxon>Bacillati</taxon>
        <taxon>Actinomycetota</taxon>
        <taxon>Actinomycetes</taxon>
        <taxon>Mycobacteriales</taxon>
        <taxon>Mycobacteriaceae</taxon>
        <taxon>Mycobacterium</taxon>
        <taxon>Mycobacterium tuberculosis complex</taxon>
    </lineage>
</organism>
<dbReference type="EC" id="1.14.13.-"/>
<dbReference type="EMBL" id="AL123456">
    <property type="protein sequence ID" value="CCP45892.1"/>
    <property type="molecule type" value="Genomic_DNA"/>
</dbReference>
<dbReference type="PIR" id="G70852">
    <property type="entry name" value="G70852"/>
</dbReference>
<dbReference type="RefSeq" id="NP_217599.1">
    <property type="nucleotide sequence ID" value="NC_000962.3"/>
</dbReference>
<dbReference type="RefSeq" id="WP_003899906.1">
    <property type="nucleotide sequence ID" value="NZ_NVQJ01000011.1"/>
</dbReference>
<dbReference type="SMR" id="P9WNF7"/>
<dbReference type="FunCoup" id="P9WNF7">
    <property type="interactions" value="28"/>
</dbReference>
<dbReference type="STRING" id="83332.Rv3083"/>
<dbReference type="BindingDB" id="P9WNF7"/>
<dbReference type="PaxDb" id="83332-Rv3083"/>
<dbReference type="GeneID" id="888655"/>
<dbReference type="KEGG" id="mtu:Rv3083"/>
<dbReference type="KEGG" id="mtv:RVBD_3083"/>
<dbReference type="TubercuList" id="Rv3083"/>
<dbReference type="eggNOG" id="COG2072">
    <property type="taxonomic scope" value="Bacteria"/>
</dbReference>
<dbReference type="InParanoid" id="P9WNF7"/>
<dbReference type="OrthoDB" id="5168853at2"/>
<dbReference type="PhylomeDB" id="P9WNF7"/>
<dbReference type="BioCyc" id="MetaCyc:G185E-7345-MONOMER"/>
<dbReference type="Proteomes" id="UP000001584">
    <property type="component" value="Chromosome"/>
</dbReference>
<dbReference type="GO" id="GO:0009274">
    <property type="term" value="C:peptidoglycan-based cell wall"/>
    <property type="evidence" value="ECO:0007005"/>
    <property type="project" value="MTBBASE"/>
</dbReference>
<dbReference type="GO" id="GO:0050660">
    <property type="term" value="F:flavin adenine dinucleotide binding"/>
    <property type="evidence" value="ECO:0007669"/>
    <property type="project" value="InterPro"/>
</dbReference>
<dbReference type="GO" id="GO:0004499">
    <property type="term" value="F:N,N-dimethylaniline monooxygenase activity"/>
    <property type="evidence" value="ECO:0007669"/>
    <property type="project" value="InterPro"/>
</dbReference>
<dbReference type="GO" id="GO:0050661">
    <property type="term" value="F:NADP binding"/>
    <property type="evidence" value="ECO:0007669"/>
    <property type="project" value="InterPro"/>
</dbReference>
<dbReference type="GO" id="GO:0051701">
    <property type="term" value="P:biological process involved in interaction with host"/>
    <property type="evidence" value="ECO:0000315"/>
    <property type="project" value="MTBBASE"/>
</dbReference>
<dbReference type="GO" id="GO:0010447">
    <property type="term" value="P:response to acidic pH"/>
    <property type="evidence" value="ECO:0000270"/>
    <property type="project" value="MTBBASE"/>
</dbReference>
<dbReference type="FunFam" id="3.50.50.60:FF:000297">
    <property type="entry name" value="FAD-containing monooxygenase MymA"/>
    <property type="match status" value="1"/>
</dbReference>
<dbReference type="FunFam" id="3.50.50.60:FF:000384">
    <property type="entry name" value="FAD-containing monooxygenase MymA"/>
    <property type="match status" value="1"/>
</dbReference>
<dbReference type="Gene3D" id="3.50.50.60">
    <property type="entry name" value="FAD/NAD(P)-binding domain"/>
    <property type="match status" value="2"/>
</dbReference>
<dbReference type="InterPro" id="IPR051820">
    <property type="entry name" value="FAD-binding_MO"/>
</dbReference>
<dbReference type="InterPro" id="IPR036188">
    <property type="entry name" value="FAD/NAD-bd_sf"/>
</dbReference>
<dbReference type="InterPro" id="IPR020946">
    <property type="entry name" value="Flavin_mOase-like"/>
</dbReference>
<dbReference type="PANTHER" id="PTHR43872">
    <property type="entry name" value="MONOOXYGENASE, PUTATIVE (AFU_ORTHOLOGUE AFUA_8G02570)-RELATED"/>
    <property type="match status" value="1"/>
</dbReference>
<dbReference type="PANTHER" id="PTHR43872:SF1">
    <property type="entry name" value="MONOOXYGENASE, PUTATIVE (AFU_ORTHOLOGUE AFUA_8G02570)-RELATED"/>
    <property type="match status" value="1"/>
</dbReference>
<dbReference type="Pfam" id="PF00743">
    <property type="entry name" value="FMO-like"/>
    <property type="match status" value="1"/>
</dbReference>
<dbReference type="Pfam" id="PF13450">
    <property type="entry name" value="NAD_binding_8"/>
    <property type="match status" value="1"/>
</dbReference>
<dbReference type="SUPFAM" id="SSF51905">
    <property type="entry name" value="FAD/NAD(P)-binding domain"/>
    <property type="match status" value="2"/>
</dbReference>
<gene>
    <name type="primary">mymA</name>
    <name type="ordered locus">Rv3083</name>
</gene>
<sequence length="495" mass="55482">MNQHFDVLIIGAGLSGIGTACHVTAEFPDKTIALLERRERLGGTWDLFRYPGVRSDSDMFTFGYKFRPWRDVKVLADGASIRQYIADTATEFGVDEKIHYGLKVNTAEWSSRQCRWTVAGVHEATGETRTYTCDYLISCTGYYNYDAGYLPDFPGVHRFGGRCVHPQHWPEDLDYSGKKVVVIGSGATAVTLVPAMAGSNPGSAAHVTMLQRSPSYIFSLPAVDKISEVLGRFLPDRWVYEFGRRRNIAIQRKLYQACRRWPKLMRRLLLWEVRRRLGRSVDMSNFTPNYLPWDERLCAVPNGDLFKTLASGAASVVTDQIETFTEKGILCKSGREIEADIIVTATGLNIQMLGGMRLIVDGAEYQLPEKMTYKGVLLENAPNLAWIIGYTNASWTLKSDIAGAYLCRLLRHMADNGYTVATPRDAQDCALDVGMFDQLNSGYVKRGQDIMPRQGSKHPWRVLMHYEKDAKILLEDPIDDGVLHFAAAAQDHAAA</sequence>
<name>MYMA_MYCTU</name>
<protein>
    <recommendedName>
        <fullName>Putative FAD-containing monooxygenase MymA</fullName>
        <ecNumber>1.14.13.-</ecNumber>
    </recommendedName>
</protein>